<proteinExistence type="inferred from homology"/>
<comment type="subcellular location">
    <subcellularLocation>
        <location evidence="2">Cell membrane</location>
        <topology evidence="2">Multi-pass membrane protein</topology>
    </subcellularLocation>
</comment>
<comment type="similarity">
    <text evidence="2">Belongs to the mycobacterial PE family.</text>
</comment>
<name>PE23_MYCBO</name>
<evidence type="ECO:0000255" key="1"/>
<evidence type="ECO:0000305" key="2"/>
<accession>P0A685</accession>
<accession>A0A1R3Y197</accession>
<accession>P71884</accession>
<accession>X2BKT3</accession>
<reference key="1">
    <citation type="journal article" date="2003" name="Proc. Natl. Acad. Sci. U.S.A.">
        <title>The complete genome sequence of Mycobacterium bovis.</title>
        <authorList>
            <person name="Garnier T."/>
            <person name="Eiglmeier K."/>
            <person name="Camus J.-C."/>
            <person name="Medina N."/>
            <person name="Mansoor H."/>
            <person name="Pryor M."/>
            <person name="Duthoy S."/>
            <person name="Grondin S."/>
            <person name="Lacroix C."/>
            <person name="Monsempe C."/>
            <person name="Simon S."/>
            <person name="Harris B."/>
            <person name="Atkin R."/>
            <person name="Doggett J."/>
            <person name="Mayes R."/>
            <person name="Keating L."/>
            <person name="Wheeler P.R."/>
            <person name="Parkhill J."/>
            <person name="Barrell B.G."/>
            <person name="Cole S.T."/>
            <person name="Gordon S.V."/>
            <person name="Hewinson R.G."/>
        </authorList>
    </citation>
    <scope>NUCLEOTIDE SEQUENCE [LARGE SCALE GENOMIC DNA]</scope>
    <source>
        <strain>ATCC BAA-935 / AF2122/97</strain>
    </source>
</reference>
<reference key="2">
    <citation type="journal article" date="2017" name="Genome Announc.">
        <title>Updated reference genome sequence and annotation of Mycobacterium bovis AF2122/97.</title>
        <authorList>
            <person name="Malone K.M."/>
            <person name="Farrell D."/>
            <person name="Stuber T.P."/>
            <person name="Schubert O.T."/>
            <person name="Aebersold R."/>
            <person name="Robbe-Austerman S."/>
            <person name="Gordon S.V."/>
        </authorList>
    </citation>
    <scope>NUCLEOTIDE SEQUENCE [LARGE SCALE GENOMIC DNA]</scope>
    <scope>GENOME REANNOTATION</scope>
    <source>
        <strain>ATCC BAA-935 / AF2122/97</strain>
    </source>
</reference>
<sequence>MQFLSVIPEQVESAAQDLAGIRSALSASYAAAAGPTTAVVSAAEDEVSTAIASIFGAYGRQCQVLSAQASAFHDEFVNLLKTGATAYRNTEFANAQSNVLNAVNAPARSLLGHPSAAESVQNSAPTLGGGHSTVTAGLAAQAGRAVATVEQQAAAAVAPLPSAGAGLAQVVNGVVTAGQGSAAKLATALQSAAPWLAKSGGEFIVAGQSALTGVALLQPAVVGVVQAGGTFLTAGTSAATGLGLLTLAGVEFSQGVGNLALASGTAATGLGLLGSAGVQLFSPAFLLAVPTALGGVGSLAIAVVQLVQGVQHLSLVVPNVVAGIAALQTAGAQFAQGVNHTMLAAQLGAPGIAVLQTAGGHFAQGIGHLTTAGNAAVTVLIS</sequence>
<dbReference type="EMBL" id="LT708304">
    <property type="protein sequence ID" value="SIU00967.1"/>
    <property type="molecule type" value="Genomic_DNA"/>
</dbReference>
<dbReference type="RefSeq" id="NP_856004.1">
    <property type="nucleotide sequence ID" value="NC_002945.3"/>
</dbReference>
<dbReference type="RefSeq" id="WP_003411972.1">
    <property type="nucleotide sequence ID" value="NC_002945.4"/>
</dbReference>
<dbReference type="SMR" id="P0A685"/>
<dbReference type="KEGG" id="mbo:BQ2027_MB2355"/>
<dbReference type="PATRIC" id="fig|233413.5.peg.2583"/>
<dbReference type="Proteomes" id="UP000001419">
    <property type="component" value="Chromosome"/>
</dbReference>
<dbReference type="GO" id="GO:0005886">
    <property type="term" value="C:plasma membrane"/>
    <property type="evidence" value="ECO:0007669"/>
    <property type="project" value="UniProtKB-SubCell"/>
</dbReference>
<dbReference type="Gene3D" id="1.10.287.850">
    <property type="entry name" value="HP0062-like domain"/>
    <property type="match status" value="1"/>
</dbReference>
<dbReference type="InterPro" id="IPR000084">
    <property type="entry name" value="PE-PGRS_N"/>
</dbReference>
<dbReference type="Pfam" id="PF00934">
    <property type="entry name" value="PE"/>
    <property type="match status" value="1"/>
</dbReference>
<dbReference type="SUPFAM" id="SSF140459">
    <property type="entry name" value="PE/PPE dimer-like"/>
    <property type="match status" value="1"/>
</dbReference>
<keyword id="KW-1003">Cell membrane</keyword>
<keyword id="KW-0472">Membrane</keyword>
<keyword id="KW-1185">Reference proteome</keyword>
<keyword id="KW-0812">Transmembrane</keyword>
<keyword id="KW-1133">Transmembrane helix</keyword>
<gene>
    <name type="primary">PE23</name>
    <name type="ordered locus">BQ2027_MB2355</name>
</gene>
<organism>
    <name type="scientific">Mycobacterium bovis (strain ATCC BAA-935 / AF2122/97)</name>
    <dbReference type="NCBI Taxonomy" id="233413"/>
    <lineage>
        <taxon>Bacteria</taxon>
        <taxon>Bacillati</taxon>
        <taxon>Actinomycetota</taxon>
        <taxon>Actinomycetes</taxon>
        <taxon>Mycobacteriales</taxon>
        <taxon>Mycobacteriaceae</taxon>
        <taxon>Mycobacterium</taxon>
        <taxon>Mycobacterium tuberculosis complex</taxon>
    </lineage>
</organism>
<feature type="chain" id="PRO_0000216161" description="Uncharacterized PE family protein PE23">
    <location>
        <begin position="1"/>
        <end position="382"/>
    </location>
</feature>
<feature type="transmembrane region" description="Helical" evidence="1">
    <location>
        <begin position="23"/>
        <end position="43"/>
    </location>
</feature>
<feature type="transmembrane region" description="Helical" evidence="1">
    <location>
        <begin position="155"/>
        <end position="175"/>
    </location>
</feature>
<feature type="transmembrane region" description="Helical" evidence="1">
    <location>
        <begin position="203"/>
        <end position="223"/>
    </location>
</feature>
<feature type="transmembrane region" description="Helical" evidence="1">
    <location>
        <begin position="230"/>
        <end position="250"/>
    </location>
</feature>
<feature type="transmembrane region" description="Helical" evidence="1">
    <location>
        <begin position="261"/>
        <end position="281"/>
    </location>
</feature>
<feature type="transmembrane region" description="Helical" evidence="1">
    <location>
        <begin position="284"/>
        <end position="304"/>
    </location>
</feature>
<feature type="transmembrane region" description="Helical" evidence="1">
    <location>
        <begin position="315"/>
        <end position="335"/>
    </location>
</feature>
<feature type="transmembrane region" description="Helical" evidence="1">
    <location>
        <begin position="347"/>
        <end position="367"/>
    </location>
</feature>
<feature type="domain" description="PE" evidence="1">
    <location>
        <begin position="1"/>
        <end position="92"/>
    </location>
</feature>
<protein>
    <recommendedName>
        <fullName>Uncharacterized PE family protein PE23</fullName>
    </recommendedName>
</protein>